<gene>
    <name evidence="1" type="primary">fusA</name>
    <name type="ordered locus">NMB0138</name>
</gene>
<keyword id="KW-0963">Cytoplasm</keyword>
<keyword id="KW-0251">Elongation factor</keyword>
<keyword id="KW-0342">GTP-binding</keyword>
<keyword id="KW-0547">Nucleotide-binding</keyword>
<keyword id="KW-0648">Protein biosynthesis</keyword>
<keyword id="KW-1185">Reference proteome</keyword>
<dbReference type="EMBL" id="AE002098">
    <property type="protein sequence ID" value="AAF40597.1"/>
    <property type="molecule type" value="Genomic_DNA"/>
</dbReference>
<dbReference type="PIR" id="C81234">
    <property type="entry name" value="C81234"/>
</dbReference>
<dbReference type="RefSeq" id="NP_273196.1">
    <property type="nucleotide sequence ID" value="NC_003112.2"/>
</dbReference>
<dbReference type="RefSeq" id="WP_002218568.1">
    <property type="nucleotide sequence ID" value="NC_003112.2"/>
</dbReference>
<dbReference type="SMR" id="Q9K1I8"/>
<dbReference type="FunCoup" id="Q9K1I8">
    <property type="interactions" value="566"/>
</dbReference>
<dbReference type="STRING" id="122586.NMB0138"/>
<dbReference type="PaxDb" id="122586-NMB0138"/>
<dbReference type="KEGG" id="nme:NMB0138"/>
<dbReference type="PATRIC" id="fig|122586.8.peg.178"/>
<dbReference type="HOGENOM" id="CLU_002794_4_1_4"/>
<dbReference type="InParanoid" id="Q9K1I8"/>
<dbReference type="OrthoDB" id="9804431at2"/>
<dbReference type="Proteomes" id="UP000000425">
    <property type="component" value="Chromosome"/>
</dbReference>
<dbReference type="GO" id="GO:0005737">
    <property type="term" value="C:cytoplasm"/>
    <property type="evidence" value="ECO:0007669"/>
    <property type="project" value="UniProtKB-SubCell"/>
</dbReference>
<dbReference type="GO" id="GO:0005525">
    <property type="term" value="F:GTP binding"/>
    <property type="evidence" value="ECO:0007669"/>
    <property type="project" value="UniProtKB-UniRule"/>
</dbReference>
<dbReference type="GO" id="GO:0003924">
    <property type="term" value="F:GTPase activity"/>
    <property type="evidence" value="ECO:0007669"/>
    <property type="project" value="InterPro"/>
</dbReference>
<dbReference type="GO" id="GO:0097216">
    <property type="term" value="F:guanosine tetraphosphate binding"/>
    <property type="evidence" value="ECO:0007669"/>
    <property type="project" value="UniProtKB-ARBA"/>
</dbReference>
<dbReference type="GO" id="GO:0003746">
    <property type="term" value="F:translation elongation factor activity"/>
    <property type="evidence" value="ECO:0007669"/>
    <property type="project" value="UniProtKB-UniRule"/>
</dbReference>
<dbReference type="GO" id="GO:0032790">
    <property type="term" value="P:ribosome disassembly"/>
    <property type="evidence" value="ECO:0000318"/>
    <property type="project" value="GO_Central"/>
</dbReference>
<dbReference type="CDD" id="cd01886">
    <property type="entry name" value="EF-G"/>
    <property type="match status" value="1"/>
</dbReference>
<dbReference type="CDD" id="cd16262">
    <property type="entry name" value="EFG_III"/>
    <property type="match status" value="1"/>
</dbReference>
<dbReference type="CDD" id="cd01434">
    <property type="entry name" value="EFG_mtEFG1_IV"/>
    <property type="match status" value="1"/>
</dbReference>
<dbReference type="CDD" id="cd03713">
    <property type="entry name" value="EFG_mtEFG_C"/>
    <property type="match status" value="1"/>
</dbReference>
<dbReference type="CDD" id="cd04088">
    <property type="entry name" value="EFG_mtEFG_II"/>
    <property type="match status" value="1"/>
</dbReference>
<dbReference type="FunFam" id="2.40.30.10:FF:000006">
    <property type="entry name" value="Elongation factor G"/>
    <property type="match status" value="1"/>
</dbReference>
<dbReference type="FunFam" id="3.30.230.10:FF:000003">
    <property type="entry name" value="Elongation factor G"/>
    <property type="match status" value="1"/>
</dbReference>
<dbReference type="FunFam" id="3.30.70.240:FF:000001">
    <property type="entry name" value="Elongation factor G"/>
    <property type="match status" value="1"/>
</dbReference>
<dbReference type="FunFam" id="3.30.70.870:FF:000001">
    <property type="entry name" value="Elongation factor G"/>
    <property type="match status" value="1"/>
</dbReference>
<dbReference type="FunFam" id="3.40.50.300:FF:000029">
    <property type="entry name" value="Elongation factor G"/>
    <property type="match status" value="1"/>
</dbReference>
<dbReference type="Gene3D" id="3.30.230.10">
    <property type="match status" value="1"/>
</dbReference>
<dbReference type="Gene3D" id="3.30.70.240">
    <property type="match status" value="1"/>
</dbReference>
<dbReference type="Gene3D" id="3.30.70.870">
    <property type="entry name" value="Elongation Factor G (Translational Gtpase), domain 3"/>
    <property type="match status" value="1"/>
</dbReference>
<dbReference type="Gene3D" id="3.40.50.300">
    <property type="entry name" value="P-loop containing nucleotide triphosphate hydrolases"/>
    <property type="match status" value="1"/>
</dbReference>
<dbReference type="Gene3D" id="2.40.30.10">
    <property type="entry name" value="Translation factors"/>
    <property type="match status" value="1"/>
</dbReference>
<dbReference type="HAMAP" id="MF_00054_B">
    <property type="entry name" value="EF_G_EF_2_B"/>
    <property type="match status" value="1"/>
</dbReference>
<dbReference type="InterPro" id="IPR041095">
    <property type="entry name" value="EFG_II"/>
</dbReference>
<dbReference type="InterPro" id="IPR009022">
    <property type="entry name" value="EFG_III"/>
</dbReference>
<dbReference type="InterPro" id="IPR035647">
    <property type="entry name" value="EFG_III/V"/>
</dbReference>
<dbReference type="InterPro" id="IPR047872">
    <property type="entry name" value="EFG_IV"/>
</dbReference>
<dbReference type="InterPro" id="IPR035649">
    <property type="entry name" value="EFG_V"/>
</dbReference>
<dbReference type="InterPro" id="IPR000640">
    <property type="entry name" value="EFG_V-like"/>
</dbReference>
<dbReference type="InterPro" id="IPR004161">
    <property type="entry name" value="EFTu-like_2"/>
</dbReference>
<dbReference type="InterPro" id="IPR031157">
    <property type="entry name" value="G_TR_CS"/>
</dbReference>
<dbReference type="InterPro" id="IPR027417">
    <property type="entry name" value="P-loop_NTPase"/>
</dbReference>
<dbReference type="InterPro" id="IPR020568">
    <property type="entry name" value="Ribosomal_Su5_D2-typ_SF"/>
</dbReference>
<dbReference type="InterPro" id="IPR014721">
    <property type="entry name" value="Ribsml_uS5_D2-typ_fold_subgr"/>
</dbReference>
<dbReference type="InterPro" id="IPR005225">
    <property type="entry name" value="Small_GTP-bd"/>
</dbReference>
<dbReference type="InterPro" id="IPR000795">
    <property type="entry name" value="T_Tr_GTP-bd_dom"/>
</dbReference>
<dbReference type="InterPro" id="IPR009000">
    <property type="entry name" value="Transl_B-barrel_sf"/>
</dbReference>
<dbReference type="InterPro" id="IPR004540">
    <property type="entry name" value="Transl_elong_EFG/EF2"/>
</dbReference>
<dbReference type="InterPro" id="IPR005517">
    <property type="entry name" value="Transl_elong_EFG/EF2_IV"/>
</dbReference>
<dbReference type="NCBIfam" id="TIGR00484">
    <property type="entry name" value="EF-G"/>
    <property type="match status" value="1"/>
</dbReference>
<dbReference type="NCBIfam" id="NF009381">
    <property type="entry name" value="PRK12740.1-5"/>
    <property type="match status" value="1"/>
</dbReference>
<dbReference type="NCBIfam" id="TIGR00231">
    <property type="entry name" value="small_GTP"/>
    <property type="match status" value="1"/>
</dbReference>
<dbReference type="PANTHER" id="PTHR43261:SF1">
    <property type="entry name" value="RIBOSOME-RELEASING FACTOR 2, MITOCHONDRIAL"/>
    <property type="match status" value="1"/>
</dbReference>
<dbReference type="PANTHER" id="PTHR43261">
    <property type="entry name" value="TRANSLATION ELONGATION FACTOR G-RELATED"/>
    <property type="match status" value="1"/>
</dbReference>
<dbReference type="Pfam" id="PF00679">
    <property type="entry name" value="EFG_C"/>
    <property type="match status" value="1"/>
</dbReference>
<dbReference type="Pfam" id="PF14492">
    <property type="entry name" value="EFG_III"/>
    <property type="match status" value="1"/>
</dbReference>
<dbReference type="Pfam" id="PF03764">
    <property type="entry name" value="EFG_IV"/>
    <property type="match status" value="1"/>
</dbReference>
<dbReference type="Pfam" id="PF00009">
    <property type="entry name" value="GTP_EFTU"/>
    <property type="match status" value="1"/>
</dbReference>
<dbReference type="Pfam" id="PF03144">
    <property type="entry name" value="GTP_EFTU_D2"/>
    <property type="match status" value="1"/>
</dbReference>
<dbReference type="PRINTS" id="PR00315">
    <property type="entry name" value="ELONGATNFCT"/>
</dbReference>
<dbReference type="SMART" id="SM00838">
    <property type="entry name" value="EFG_C"/>
    <property type="match status" value="1"/>
</dbReference>
<dbReference type="SMART" id="SM00889">
    <property type="entry name" value="EFG_IV"/>
    <property type="match status" value="1"/>
</dbReference>
<dbReference type="SUPFAM" id="SSF54980">
    <property type="entry name" value="EF-G C-terminal domain-like"/>
    <property type="match status" value="2"/>
</dbReference>
<dbReference type="SUPFAM" id="SSF52540">
    <property type="entry name" value="P-loop containing nucleoside triphosphate hydrolases"/>
    <property type="match status" value="1"/>
</dbReference>
<dbReference type="SUPFAM" id="SSF54211">
    <property type="entry name" value="Ribosomal protein S5 domain 2-like"/>
    <property type="match status" value="1"/>
</dbReference>
<dbReference type="SUPFAM" id="SSF50447">
    <property type="entry name" value="Translation proteins"/>
    <property type="match status" value="1"/>
</dbReference>
<dbReference type="PROSITE" id="PS00301">
    <property type="entry name" value="G_TR_1"/>
    <property type="match status" value="1"/>
</dbReference>
<dbReference type="PROSITE" id="PS51722">
    <property type="entry name" value="G_TR_2"/>
    <property type="match status" value="1"/>
</dbReference>
<evidence type="ECO:0000255" key="1">
    <source>
        <dbReference type="HAMAP-Rule" id="MF_00054"/>
    </source>
</evidence>
<reference key="1">
    <citation type="journal article" date="2000" name="Science">
        <title>Complete genome sequence of Neisseria meningitidis serogroup B strain MC58.</title>
        <authorList>
            <person name="Tettelin H."/>
            <person name="Saunders N.J."/>
            <person name="Heidelberg J.F."/>
            <person name="Jeffries A.C."/>
            <person name="Nelson K.E."/>
            <person name="Eisen J.A."/>
            <person name="Ketchum K.A."/>
            <person name="Hood D.W."/>
            <person name="Peden J.F."/>
            <person name="Dodson R.J."/>
            <person name="Nelson W.C."/>
            <person name="Gwinn M.L."/>
            <person name="DeBoy R.T."/>
            <person name="Peterson J.D."/>
            <person name="Hickey E.K."/>
            <person name="Haft D.H."/>
            <person name="Salzberg S.L."/>
            <person name="White O."/>
            <person name="Fleischmann R.D."/>
            <person name="Dougherty B.A."/>
            <person name="Mason T.M."/>
            <person name="Ciecko A."/>
            <person name="Parksey D.S."/>
            <person name="Blair E."/>
            <person name="Cittone H."/>
            <person name="Clark E.B."/>
            <person name="Cotton M.D."/>
            <person name="Utterback T.R."/>
            <person name="Khouri H.M."/>
            <person name="Qin H."/>
            <person name="Vamathevan J.J."/>
            <person name="Gill J."/>
            <person name="Scarlato V."/>
            <person name="Masignani V."/>
            <person name="Pizza M."/>
            <person name="Grandi G."/>
            <person name="Sun L."/>
            <person name="Smith H.O."/>
            <person name="Fraser C.M."/>
            <person name="Moxon E.R."/>
            <person name="Rappuoli R."/>
            <person name="Venter J.C."/>
        </authorList>
    </citation>
    <scope>NUCLEOTIDE SEQUENCE [LARGE SCALE GENOMIC DNA]</scope>
    <source>
        <strain>ATCC BAA-335 / MC58</strain>
    </source>
</reference>
<reference key="2">
    <citation type="journal article" date="2005" name="Hum. Vaccin.">
        <title>Characterization of the protein content of a meningococcal outer membrane vesicle vaccine by polyacrylamide gel electrophoresis and mass spectrometry.</title>
        <authorList>
            <person name="Vipond C."/>
            <person name="Wheeler J.X."/>
            <person name="Jones C."/>
            <person name="Feavers I.M."/>
            <person name="Suker J."/>
        </authorList>
    </citation>
    <scope>IDENTIFICATION BY MASS SPECTROMETRY [LARGE SCALE ANALYSIS]</scope>
</reference>
<reference key="3">
    <citation type="journal article" date="2006" name="Proteomics">
        <title>Proteomic analysis of a meningococcal outer membrane vesicle vaccine prepared from the group B strain NZ98/254.</title>
        <authorList>
            <person name="Vipond C."/>
            <person name="Suker J."/>
            <person name="Jones C."/>
            <person name="Tang C."/>
            <person name="Feavers I.M."/>
            <person name="Wheeler J.X."/>
        </authorList>
    </citation>
    <scope>IDENTIFICATION BY MASS SPECTROMETRY [LARGE SCALE ANALYSIS]</scope>
    <source>
        <strain>NZ98/254 / Serogroup B</strain>
    </source>
</reference>
<feature type="chain" id="PRO_0000091168" description="Elongation factor G">
    <location>
        <begin position="1"/>
        <end position="701"/>
    </location>
</feature>
<feature type="domain" description="tr-type G">
    <location>
        <begin position="8"/>
        <end position="290"/>
    </location>
</feature>
<feature type="binding site" evidence="1">
    <location>
        <begin position="17"/>
        <end position="24"/>
    </location>
    <ligand>
        <name>GTP</name>
        <dbReference type="ChEBI" id="CHEBI:37565"/>
    </ligand>
</feature>
<feature type="binding site" evidence="1">
    <location>
        <begin position="88"/>
        <end position="92"/>
    </location>
    <ligand>
        <name>GTP</name>
        <dbReference type="ChEBI" id="CHEBI:37565"/>
    </ligand>
</feature>
<feature type="binding site" evidence="1">
    <location>
        <begin position="142"/>
        <end position="145"/>
    </location>
    <ligand>
        <name>GTP</name>
        <dbReference type="ChEBI" id="CHEBI:37565"/>
    </ligand>
</feature>
<organism>
    <name type="scientific">Neisseria meningitidis serogroup B (strain ATCC BAA-335 / MC58)</name>
    <dbReference type="NCBI Taxonomy" id="122586"/>
    <lineage>
        <taxon>Bacteria</taxon>
        <taxon>Pseudomonadati</taxon>
        <taxon>Pseudomonadota</taxon>
        <taxon>Betaproteobacteria</taxon>
        <taxon>Neisseriales</taxon>
        <taxon>Neisseriaceae</taxon>
        <taxon>Neisseria</taxon>
    </lineage>
</organism>
<comment type="function">
    <text evidence="1">Catalyzes the GTP-dependent ribosomal translocation step during translation elongation. During this step, the ribosome changes from the pre-translocational (PRE) to the post-translocational (POST) state as the newly formed A-site-bound peptidyl-tRNA and P-site-bound deacylated tRNA move to the P and E sites, respectively. Catalyzes the coordinated movement of the two tRNA molecules, the mRNA and conformational changes in the ribosome.</text>
</comment>
<comment type="subcellular location">
    <subcellularLocation>
        <location evidence="1">Cytoplasm</location>
    </subcellularLocation>
</comment>
<comment type="miscellaneous">
    <text>Present in outer membrane vesicle formulations which are used as vaccines in human.</text>
</comment>
<comment type="similarity">
    <text evidence="1">Belongs to the TRAFAC class translation factor GTPase superfamily. Classic translation factor GTPase family. EF-G/EF-2 subfamily.</text>
</comment>
<protein>
    <recommendedName>
        <fullName evidence="1">Elongation factor G</fullName>
        <shortName evidence="1">EF-G</shortName>
    </recommendedName>
</protein>
<accession>Q9K1I8</accession>
<sequence>MARKTPISLYRNIGISAHIDAGKTTTTERILFYTGLTHKLGEVHDGAATTDYMEQEQERGITITSAAVTSYWSGMAKQFPEHRFNIIDTPGHVDFTVEVERSMRVLDGAVMVYCAVGGVQPQSETVWRQANKYQVPRLAFVNKMDRQGANFFRVVEQMKTRLRANPVPIVIPVGAEDNFSGVVDLLKMKSIIWNEVDKGTTFTYGDIPAELVETAEEWRQNMIEAAAEASEELMDKYLGGDELTEEEIVGALRQRTLAGEIQPMLCGSAFKNKGVQRMLDAVVELLPAPTDIPPVQGVNPNTEEADSRQASDEEKFSALAFKMLNDKYVGQLTFIRVYSGVVKSGDTVLNSVKGTRERIGRLVQMTAADRTEIEEVRAGDIAAAIGLKDVTTGETLCAESAPIILERMEFPEPVIHIAVEPKTKADQEKMGIALNRLAKEDPSFRVRTDEESGQTIISGMGELHLEIIVDRMKREFGVEANIGAPQVAYRETIRKAVKAEYKHAKQSGGKGQYGHVVIEMEPMEPGGEGYEFIDEIKGGVIPREFIPSVDKGIRDTLPNGIVAGYPVVDVRIRLVFGSYHDVDSSQLAFELAASQAFKEGMRQASPALLEPIMAVEVETPEEYMGDVMGDLNRRRGVVLGMDDDGIGGKKVRAEVPLAEMFGYSTDLRSATQGRATYSMEFKKYSEAPAHIAAAVTEARKG</sequence>
<name>EFG_NEIMB</name>
<proteinExistence type="evidence at protein level"/>